<accession>B7UYS5</accession>
<evidence type="ECO:0000255" key="1">
    <source>
        <dbReference type="HAMAP-Rule" id="MF_00364"/>
    </source>
</evidence>
<protein>
    <recommendedName>
        <fullName evidence="1">Beta-hexosaminidase</fullName>
        <ecNumber evidence="1">3.2.1.52</ecNumber>
    </recommendedName>
    <alternativeName>
        <fullName evidence="1">Beta-N-acetylhexosaminidase</fullName>
    </alternativeName>
    <alternativeName>
        <fullName evidence="1">N-acetyl-beta-glucosaminidase</fullName>
    </alternativeName>
</protein>
<organism>
    <name type="scientific">Pseudomonas aeruginosa (strain LESB58)</name>
    <dbReference type="NCBI Taxonomy" id="557722"/>
    <lineage>
        <taxon>Bacteria</taxon>
        <taxon>Pseudomonadati</taxon>
        <taxon>Pseudomonadota</taxon>
        <taxon>Gammaproteobacteria</taxon>
        <taxon>Pseudomonadales</taxon>
        <taxon>Pseudomonadaceae</taxon>
        <taxon>Pseudomonas</taxon>
    </lineage>
</organism>
<proteinExistence type="inferred from homology"/>
<gene>
    <name evidence="1" type="primary">nagZ</name>
    <name type="ordered locus">PLES_20571</name>
</gene>
<reference key="1">
    <citation type="journal article" date="2009" name="Genome Res.">
        <title>Newly introduced genomic prophage islands are critical determinants of in vivo competitiveness in the Liverpool epidemic strain of Pseudomonas aeruginosa.</title>
        <authorList>
            <person name="Winstanley C."/>
            <person name="Langille M.G.I."/>
            <person name="Fothergill J.L."/>
            <person name="Kukavica-Ibrulj I."/>
            <person name="Paradis-Bleau C."/>
            <person name="Sanschagrin F."/>
            <person name="Thomson N.R."/>
            <person name="Winsor G.L."/>
            <person name="Quail M.A."/>
            <person name="Lennard N."/>
            <person name="Bignell A."/>
            <person name="Clarke L."/>
            <person name="Seeger K."/>
            <person name="Saunders D."/>
            <person name="Harris D."/>
            <person name="Parkhill J."/>
            <person name="Hancock R.E.W."/>
            <person name="Brinkman F.S.L."/>
            <person name="Levesque R.C."/>
        </authorList>
    </citation>
    <scope>NUCLEOTIDE SEQUENCE [LARGE SCALE GENOMIC DNA]</scope>
    <source>
        <strain>LESB58</strain>
    </source>
</reference>
<name>NAGZ_PSEA8</name>
<keyword id="KW-0131">Cell cycle</keyword>
<keyword id="KW-0132">Cell division</keyword>
<keyword id="KW-0133">Cell shape</keyword>
<keyword id="KW-0961">Cell wall biogenesis/degradation</keyword>
<keyword id="KW-0963">Cytoplasm</keyword>
<keyword id="KW-0326">Glycosidase</keyword>
<keyword id="KW-0378">Hydrolase</keyword>
<keyword id="KW-0573">Peptidoglycan synthesis</keyword>
<sequence length="332" mass="36101">MQGSLMLDIGGTWLTAEDRQILRHPEVGGLIIFARNIEHPAQVRELCAAIRAIRPDLLLAVDQEGGRVQRLRQGFVRLPAMRAIADNPNAEELAEHCGWLMATEVQAVGLDLSFAPVLDLDHQRSAVVGSRAFEGDPERAALLAGAFIRGMHAAGMAATGKHFPGHGWAEADSHVAIPEDARSLEEIRRSDLVPFARLAGQLDALMPAHVIYPQVDPQPAGFSRRWLQEILRGELKFDGVIFSDDLSMAGAHVVGDAASRIEAALAAGCDMGLVCNDRASAELALAALQRLKVTPPSRLQRMRGKGYANTDYRQQPRWLEALSALRAAQLID</sequence>
<dbReference type="EC" id="3.2.1.52" evidence="1"/>
<dbReference type="EMBL" id="FM209186">
    <property type="protein sequence ID" value="CAW26784.1"/>
    <property type="molecule type" value="Genomic_DNA"/>
</dbReference>
<dbReference type="RefSeq" id="WP_003118092.1">
    <property type="nucleotide sequence ID" value="NC_011770.1"/>
</dbReference>
<dbReference type="SMR" id="B7UYS5"/>
<dbReference type="CAZy" id="GH3">
    <property type="family name" value="Glycoside Hydrolase Family 3"/>
</dbReference>
<dbReference type="KEGG" id="pag:PLES_20571"/>
<dbReference type="HOGENOM" id="CLU_008392_0_0_6"/>
<dbReference type="UniPathway" id="UPA00544"/>
<dbReference type="GO" id="GO:0005737">
    <property type="term" value="C:cytoplasm"/>
    <property type="evidence" value="ECO:0007669"/>
    <property type="project" value="UniProtKB-SubCell"/>
</dbReference>
<dbReference type="GO" id="GO:0004563">
    <property type="term" value="F:beta-N-acetylhexosaminidase activity"/>
    <property type="evidence" value="ECO:0007669"/>
    <property type="project" value="UniProtKB-UniRule"/>
</dbReference>
<dbReference type="GO" id="GO:0005975">
    <property type="term" value="P:carbohydrate metabolic process"/>
    <property type="evidence" value="ECO:0007669"/>
    <property type="project" value="InterPro"/>
</dbReference>
<dbReference type="GO" id="GO:0051301">
    <property type="term" value="P:cell division"/>
    <property type="evidence" value="ECO:0007669"/>
    <property type="project" value="UniProtKB-KW"/>
</dbReference>
<dbReference type="GO" id="GO:0071555">
    <property type="term" value="P:cell wall organization"/>
    <property type="evidence" value="ECO:0007669"/>
    <property type="project" value="UniProtKB-KW"/>
</dbReference>
<dbReference type="GO" id="GO:0009252">
    <property type="term" value="P:peptidoglycan biosynthetic process"/>
    <property type="evidence" value="ECO:0007669"/>
    <property type="project" value="UniProtKB-KW"/>
</dbReference>
<dbReference type="GO" id="GO:0009254">
    <property type="term" value="P:peptidoglycan turnover"/>
    <property type="evidence" value="ECO:0007669"/>
    <property type="project" value="UniProtKB-UniRule"/>
</dbReference>
<dbReference type="GO" id="GO:0008360">
    <property type="term" value="P:regulation of cell shape"/>
    <property type="evidence" value="ECO:0007669"/>
    <property type="project" value="UniProtKB-KW"/>
</dbReference>
<dbReference type="FunFam" id="3.20.20.300:FF:000001">
    <property type="entry name" value="Beta-hexosaminidase"/>
    <property type="match status" value="1"/>
</dbReference>
<dbReference type="Gene3D" id="3.20.20.300">
    <property type="entry name" value="Glycoside hydrolase, family 3, N-terminal domain"/>
    <property type="match status" value="1"/>
</dbReference>
<dbReference type="HAMAP" id="MF_00364">
    <property type="entry name" value="NagZ"/>
    <property type="match status" value="1"/>
</dbReference>
<dbReference type="InterPro" id="IPR022956">
    <property type="entry name" value="Beta_hexosaminidase_bac"/>
</dbReference>
<dbReference type="InterPro" id="IPR019800">
    <property type="entry name" value="Glyco_hydro_3_AS"/>
</dbReference>
<dbReference type="InterPro" id="IPR001764">
    <property type="entry name" value="Glyco_hydro_3_N"/>
</dbReference>
<dbReference type="InterPro" id="IPR036962">
    <property type="entry name" value="Glyco_hydro_3_N_sf"/>
</dbReference>
<dbReference type="InterPro" id="IPR017853">
    <property type="entry name" value="Glycoside_hydrolase_SF"/>
</dbReference>
<dbReference type="InterPro" id="IPR050226">
    <property type="entry name" value="NagZ_Beta-hexosaminidase"/>
</dbReference>
<dbReference type="NCBIfam" id="NF003740">
    <property type="entry name" value="PRK05337.1"/>
    <property type="match status" value="1"/>
</dbReference>
<dbReference type="PANTHER" id="PTHR30480:SF13">
    <property type="entry name" value="BETA-HEXOSAMINIDASE"/>
    <property type="match status" value="1"/>
</dbReference>
<dbReference type="PANTHER" id="PTHR30480">
    <property type="entry name" value="BETA-HEXOSAMINIDASE-RELATED"/>
    <property type="match status" value="1"/>
</dbReference>
<dbReference type="Pfam" id="PF00933">
    <property type="entry name" value="Glyco_hydro_3"/>
    <property type="match status" value="1"/>
</dbReference>
<dbReference type="SUPFAM" id="SSF51445">
    <property type="entry name" value="(Trans)glycosidases"/>
    <property type="match status" value="1"/>
</dbReference>
<dbReference type="PROSITE" id="PS00775">
    <property type="entry name" value="GLYCOSYL_HYDROL_F3"/>
    <property type="match status" value="1"/>
</dbReference>
<comment type="function">
    <text evidence="1">Plays a role in peptidoglycan recycling by cleaving the terminal beta-1,4-linked N-acetylglucosamine (GlcNAc) from peptide-linked peptidoglycan fragments, giving rise to free GlcNAc, anhydro-N-acetylmuramic acid and anhydro-N-acetylmuramic acid-linked peptides.</text>
</comment>
<comment type="catalytic activity">
    <reaction evidence="1">
        <text>Hydrolysis of terminal non-reducing N-acetyl-D-hexosamine residues in N-acetyl-beta-D-hexosaminides.</text>
        <dbReference type="EC" id="3.2.1.52"/>
    </reaction>
</comment>
<comment type="pathway">
    <text evidence="1">Cell wall biogenesis; peptidoglycan recycling.</text>
</comment>
<comment type="subcellular location">
    <subcellularLocation>
        <location evidence="1">Cytoplasm</location>
    </subcellularLocation>
</comment>
<comment type="similarity">
    <text evidence="1">Belongs to the glycosyl hydrolase 3 family. NagZ subfamily.</text>
</comment>
<feature type="chain" id="PRO_1000121066" description="Beta-hexosaminidase">
    <location>
        <begin position="1"/>
        <end position="332"/>
    </location>
</feature>
<feature type="active site" description="Proton donor/acceptor" evidence="1">
    <location>
        <position position="174"/>
    </location>
</feature>
<feature type="active site" description="Nucleophile" evidence="1">
    <location>
        <position position="244"/>
    </location>
</feature>
<feature type="binding site" evidence="1">
    <location>
        <position position="62"/>
    </location>
    <ligand>
        <name>substrate</name>
    </ligand>
</feature>
<feature type="binding site" evidence="1">
    <location>
        <position position="70"/>
    </location>
    <ligand>
        <name>substrate</name>
    </ligand>
</feature>
<feature type="binding site" evidence="1">
    <location>
        <position position="131"/>
    </location>
    <ligand>
        <name>substrate</name>
    </ligand>
</feature>
<feature type="binding site" evidence="1">
    <location>
        <begin position="161"/>
        <end position="162"/>
    </location>
    <ligand>
        <name>substrate</name>
    </ligand>
</feature>
<feature type="site" description="Important for catalytic activity" evidence="1">
    <location>
        <position position="172"/>
    </location>
</feature>